<gene>
    <name type="ordered locus">At4g08300</name>
    <name type="ORF">T12G13</name>
</gene>
<accession>Q501F8</accession>
<accession>Q9SUF0</accession>
<keyword id="KW-0472">Membrane</keyword>
<keyword id="KW-1185">Reference proteome</keyword>
<keyword id="KW-0677">Repeat</keyword>
<keyword id="KW-0812">Transmembrane</keyword>
<keyword id="KW-1133">Transmembrane helix</keyword>
<evidence type="ECO:0000250" key="1"/>
<evidence type="ECO:0000255" key="2"/>
<evidence type="ECO:0000305" key="3"/>
<organism>
    <name type="scientific">Arabidopsis thaliana</name>
    <name type="common">Mouse-ear cress</name>
    <dbReference type="NCBI Taxonomy" id="3702"/>
    <lineage>
        <taxon>Eukaryota</taxon>
        <taxon>Viridiplantae</taxon>
        <taxon>Streptophyta</taxon>
        <taxon>Embryophyta</taxon>
        <taxon>Tracheophyta</taxon>
        <taxon>Spermatophyta</taxon>
        <taxon>Magnoliopsida</taxon>
        <taxon>eudicotyledons</taxon>
        <taxon>Gunneridae</taxon>
        <taxon>Pentapetalae</taxon>
        <taxon>rosids</taxon>
        <taxon>malvids</taxon>
        <taxon>Brassicales</taxon>
        <taxon>Brassicaceae</taxon>
        <taxon>Camelineae</taxon>
        <taxon>Arabidopsis</taxon>
    </lineage>
</organism>
<name>WTR32_ARATH</name>
<feature type="chain" id="PRO_0000421340" description="WAT1-related protein At4g08300">
    <location>
        <begin position="1"/>
        <end position="373"/>
    </location>
</feature>
<feature type="transmembrane region" description="Helical" evidence="2">
    <location>
        <begin position="11"/>
        <end position="31"/>
    </location>
</feature>
<feature type="transmembrane region" description="Helical" evidence="2">
    <location>
        <begin position="41"/>
        <end position="61"/>
    </location>
</feature>
<feature type="transmembrane region" description="Helical" evidence="2">
    <location>
        <begin position="67"/>
        <end position="87"/>
    </location>
</feature>
<feature type="transmembrane region" description="Helical" evidence="2">
    <location>
        <begin position="102"/>
        <end position="122"/>
    </location>
</feature>
<feature type="transmembrane region" description="Helical" evidence="2">
    <location>
        <begin position="139"/>
        <end position="159"/>
    </location>
</feature>
<feature type="transmembrane region" description="Helical" evidence="2">
    <location>
        <begin position="185"/>
        <end position="205"/>
    </location>
</feature>
<feature type="transmembrane region" description="Helical" evidence="2">
    <location>
        <begin position="219"/>
        <end position="239"/>
    </location>
</feature>
<feature type="transmembrane region" description="Helical" evidence="2">
    <location>
        <begin position="255"/>
        <end position="275"/>
    </location>
</feature>
<feature type="transmembrane region" description="Helical" evidence="2">
    <location>
        <begin position="281"/>
        <end position="301"/>
    </location>
</feature>
<feature type="transmembrane region" description="Helical" evidence="2">
    <location>
        <begin position="306"/>
        <end position="326"/>
    </location>
</feature>
<feature type="domain" description="EamA 1">
    <location>
        <begin position="23"/>
        <end position="151"/>
    </location>
</feature>
<feature type="domain" description="EamA 2">
    <location>
        <begin position="198"/>
        <end position="325"/>
    </location>
</feature>
<reference key="1">
    <citation type="journal article" date="1999" name="Nature">
        <title>Sequence and analysis of chromosome 4 of the plant Arabidopsis thaliana.</title>
        <authorList>
            <person name="Mayer K.F.X."/>
            <person name="Schueller C."/>
            <person name="Wambutt R."/>
            <person name="Murphy G."/>
            <person name="Volckaert G."/>
            <person name="Pohl T."/>
            <person name="Duesterhoeft A."/>
            <person name="Stiekema W."/>
            <person name="Entian K.-D."/>
            <person name="Terryn N."/>
            <person name="Harris B."/>
            <person name="Ansorge W."/>
            <person name="Brandt P."/>
            <person name="Grivell L.A."/>
            <person name="Rieger M."/>
            <person name="Weichselgartner M."/>
            <person name="de Simone V."/>
            <person name="Obermaier B."/>
            <person name="Mache R."/>
            <person name="Mueller M."/>
            <person name="Kreis M."/>
            <person name="Delseny M."/>
            <person name="Puigdomenech P."/>
            <person name="Watson M."/>
            <person name="Schmidtheini T."/>
            <person name="Reichert B."/>
            <person name="Portetelle D."/>
            <person name="Perez-Alonso M."/>
            <person name="Boutry M."/>
            <person name="Bancroft I."/>
            <person name="Vos P."/>
            <person name="Hoheisel J."/>
            <person name="Zimmermann W."/>
            <person name="Wedler H."/>
            <person name="Ridley P."/>
            <person name="Langham S.-A."/>
            <person name="McCullagh B."/>
            <person name="Bilham L."/>
            <person name="Robben J."/>
            <person name="van der Schueren J."/>
            <person name="Grymonprez B."/>
            <person name="Chuang Y.-J."/>
            <person name="Vandenbussche F."/>
            <person name="Braeken M."/>
            <person name="Weltjens I."/>
            <person name="Voet M."/>
            <person name="Bastiaens I."/>
            <person name="Aert R."/>
            <person name="Defoor E."/>
            <person name="Weitzenegger T."/>
            <person name="Bothe G."/>
            <person name="Ramsperger U."/>
            <person name="Hilbert H."/>
            <person name="Braun M."/>
            <person name="Holzer E."/>
            <person name="Brandt A."/>
            <person name="Peters S."/>
            <person name="van Staveren M."/>
            <person name="Dirkse W."/>
            <person name="Mooijman P."/>
            <person name="Klein Lankhorst R."/>
            <person name="Rose M."/>
            <person name="Hauf J."/>
            <person name="Koetter P."/>
            <person name="Berneiser S."/>
            <person name="Hempel S."/>
            <person name="Feldpausch M."/>
            <person name="Lamberth S."/>
            <person name="Van den Daele H."/>
            <person name="De Keyser A."/>
            <person name="Buysshaert C."/>
            <person name="Gielen J."/>
            <person name="Villarroel R."/>
            <person name="De Clercq R."/>
            <person name="van Montagu M."/>
            <person name="Rogers J."/>
            <person name="Cronin A."/>
            <person name="Quail M.A."/>
            <person name="Bray-Allen S."/>
            <person name="Clark L."/>
            <person name="Doggett J."/>
            <person name="Hall S."/>
            <person name="Kay M."/>
            <person name="Lennard N."/>
            <person name="McLay K."/>
            <person name="Mayes R."/>
            <person name="Pettett A."/>
            <person name="Rajandream M.A."/>
            <person name="Lyne M."/>
            <person name="Benes V."/>
            <person name="Rechmann S."/>
            <person name="Borkova D."/>
            <person name="Bloecker H."/>
            <person name="Scharfe M."/>
            <person name="Grimm M."/>
            <person name="Loehnert T.-H."/>
            <person name="Dose S."/>
            <person name="de Haan M."/>
            <person name="Maarse A.C."/>
            <person name="Schaefer M."/>
            <person name="Mueller-Auer S."/>
            <person name="Gabel C."/>
            <person name="Fuchs M."/>
            <person name="Fartmann B."/>
            <person name="Granderath K."/>
            <person name="Dauner D."/>
            <person name="Herzl A."/>
            <person name="Neumann S."/>
            <person name="Argiriou A."/>
            <person name="Vitale D."/>
            <person name="Liguori R."/>
            <person name="Piravandi E."/>
            <person name="Massenet O."/>
            <person name="Quigley F."/>
            <person name="Clabauld G."/>
            <person name="Muendlein A."/>
            <person name="Felber R."/>
            <person name="Schnabl S."/>
            <person name="Hiller R."/>
            <person name="Schmidt W."/>
            <person name="Lecharny A."/>
            <person name="Aubourg S."/>
            <person name="Chefdor F."/>
            <person name="Cooke R."/>
            <person name="Berger C."/>
            <person name="Monfort A."/>
            <person name="Casacuberta E."/>
            <person name="Gibbons T."/>
            <person name="Weber N."/>
            <person name="Vandenbol M."/>
            <person name="Bargues M."/>
            <person name="Terol J."/>
            <person name="Torres A."/>
            <person name="Perez-Perez A."/>
            <person name="Purnelle B."/>
            <person name="Bent E."/>
            <person name="Johnson S."/>
            <person name="Tacon D."/>
            <person name="Jesse T."/>
            <person name="Heijnen L."/>
            <person name="Schwarz S."/>
            <person name="Scholler P."/>
            <person name="Heber S."/>
            <person name="Francs P."/>
            <person name="Bielke C."/>
            <person name="Frishman D."/>
            <person name="Haase D."/>
            <person name="Lemcke K."/>
            <person name="Mewes H.-W."/>
            <person name="Stocker S."/>
            <person name="Zaccaria P."/>
            <person name="Bevan M."/>
            <person name="Wilson R.K."/>
            <person name="de la Bastide M."/>
            <person name="Habermann K."/>
            <person name="Parnell L."/>
            <person name="Dedhia N."/>
            <person name="Gnoj L."/>
            <person name="Schutz K."/>
            <person name="Huang E."/>
            <person name="Spiegel L."/>
            <person name="Sekhon M."/>
            <person name="Murray J."/>
            <person name="Sheet P."/>
            <person name="Cordes M."/>
            <person name="Abu-Threideh J."/>
            <person name="Stoneking T."/>
            <person name="Kalicki J."/>
            <person name="Graves T."/>
            <person name="Harmon G."/>
            <person name="Edwards J."/>
            <person name="Latreille P."/>
            <person name="Courtney L."/>
            <person name="Cloud J."/>
            <person name="Abbott A."/>
            <person name="Scott K."/>
            <person name="Johnson D."/>
            <person name="Minx P."/>
            <person name="Bentley D."/>
            <person name="Fulton B."/>
            <person name="Miller N."/>
            <person name="Greco T."/>
            <person name="Kemp K."/>
            <person name="Kramer J."/>
            <person name="Fulton L."/>
            <person name="Mardis E."/>
            <person name="Dante M."/>
            <person name="Pepin K."/>
            <person name="Hillier L.W."/>
            <person name="Nelson J."/>
            <person name="Spieth J."/>
            <person name="Ryan E."/>
            <person name="Andrews S."/>
            <person name="Geisel C."/>
            <person name="Layman D."/>
            <person name="Du H."/>
            <person name="Ali J."/>
            <person name="Berghoff A."/>
            <person name="Jones K."/>
            <person name="Drone K."/>
            <person name="Cotton M."/>
            <person name="Joshu C."/>
            <person name="Antonoiu B."/>
            <person name="Zidanic M."/>
            <person name="Strong C."/>
            <person name="Sun H."/>
            <person name="Lamar B."/>
            <person name="Yordan C."/>
            <person name="Ma P."/>
            <person name="Zhong J."/>
            <person name="Preston R."/>
            <person name="Vil D."/>
            <person name="Shekher M."/>
            <person name="Matero A."/>
            <person name="Shah R."/>
            <person name="Swaby I.K."/>
            <person name="O'Shaughnessy A."/>
            <person name="Rodriguez M."/>
            <person name="Hoffman J."/>
            <person name="Till S."/>
            <person name="Granat S."/>
            <person name="Shohdy N."/>
            <person name="Hasegawa A."/>
            <person name="Hameed A."/>
            <person name="Lodhi M."/>
            <person name="Johnson A."/>
            <person name="Chen E."/>
            <person name="Marra M.A."/>
            <person name="Martienssen R."/>
            <person name="McCombie W.R."/>
        </authorList>
    </citation>
    <scope>NUCLEOTIDE SEQUENCE [LARGE SCALE GENOMIC DNA]</scope>
    <source>
        <strain>cv. Columbia</strain>
    </source>
</reference>
<reference key="2">
    <citation type="journal article" date="2017" name="Plant J.">
        <title>Araport11: a complete reannotation of the Arabidopsis thaliana reference genome.</title>
        <authorList>
            <person name="Cheng C.Y."/>
            <person name="Krishnakumar V."/>
            <person name="Chan A.P."/>
            <person name="Thibaud-Nissen F."/>
            <person name="Schobel S."/>
            <person name="Town C.D."/>
        </authorList>
    </citation>
    <scope>GENOME REANNOTATION</scope>
    <source>
        <strain>cv. Columbia</strain>
    </source>
</reference>
<reference key="3">
    <citation type="submission" date="2005-05" db="EMBL/GenBank/DDBJ databases">
        <title>Arabidopsis ORF clones.</title>
        <authorList>
            <person name="Cheuk R.F."/>
            <person name="Chen H."/>
            <person name="Kim C.J."/>
            <person name="Shinn P."/>
            <person name="Ecker J.R."/>
        </authorList>
    </citation>
    <scope>NUCLEOTIDE SEQUENCE [LARGE SCALE MRNA]</scope>
    <source>
        <strain>cv. Columbia</strain>
    </source>
</reference>
<reference key="4">
    <citation type="submission" date="2006-07" db="EMBL/GenBank/DDBJ databases">
        <title>Large-scale analysis of RIKEN Arabidopsis full-length (RAFL) cDNAs.</title>
        <authorList>
            <person name="Totoki Y."/>
            <person name="Seki M."/>
            <person name="Ishida J."/>
            <person name="Nakajima M."/>
            <person name="Enju A."/>
            <person name="Kamiya A."/>
            <person name="Narusaka M."/>
            <person name="Shin-i T."/>
            <person name="Nakagawa M."/>
            <person name="Sakamoto N."/>
            <person name="Oishi K."/>
            <person name="Kohara Y."/>
            <person name="Kobayashi M."/>
            <person name="Toyoda A."/>
            <person name="Sakaki Y."/>
            <person name="Sakurai T."/>
            <person name="Iida K."/>
            <person name="Akiyama K."/>
            <person name="Satou M."/>
            <person name="Toyoda T."/>
            <person name="Konagaya A."/>
            <person name="Carninci P."/>
            <person name="Kawai J."/>
            <person name="Hayashizaki Y."/>
            <person name="Shinozaki K."/>
        </authorList>
    </citation>
    <scope>NUCLEOTIDE SEQUENCE [LARGE SCALE MRNA]</scope>
    <source>
        <strain>cv. Columbia</strain>
    </source>
</reference>
<sequence>MKGGKMDKLKPIIAIISLQFGYAGMYIITMVSFKHGMNHWILATYRHVVATIVIAPFALILERKIRPKMTWPLFLRILALGFLEPLLDQNLYYIGMKATSATYSSAFVNALPAITFIMAVIFRIETVNLKKTRSLAKVIGTAITVGGAMVMTLYKGPAIELFKTAHSSLHGGSSGTSSETTDQNWVTGTLAVMGSITTWAGFFILQSFTLKKYPAELSLVMWICAMGTVLNTIASLIMVRDVSAWKVGMDSGTLAAVYSGVVCSGMAYYIQSIVIRERGPVFTTSFSPMCMIITAFLGVLVLAEKIHLGSIIGAIFIVFGLYSVVWGKAKDEVISVEEKIGMQELPITNTSTKVEGGGITSEVNEGVTNNTQV</sequence>
<comment type="subcellular location">
    <subcellularLocation>
        <location evidence="1">Membrane</location>
        <topology evidence="3">Multi-pass membrane protein</topology>
    </subcellularLocation>
</comment>
<comment type="similarity">
    <text evidence="3">Belongs to the drug/metabolite transporter (DMT) superfamily. Plant drug/metabolite exporter (P-DME) (TC 2.A.7.4) family.</text>
</comment>
<comment type="sequence caution" evidence="3">
    <conflict type="erroneous initiation">
        <sequence resource="EMBL-CDS" id="CAB45800"/>
    </conflict>
    <text>Truncated N-terminus.</text>
</comment>
<comment type="sequence caution" evidence="3">
    <conflict type="erroneous initiation">
        <sequence resource="EMBL-CDS" id="CAB77955"/>
    </conflict>
    <text>Truncated N-terminus.</text>
</comment>
<dbReference type="EMBL" id="AL080252">
    <property type="protein sequence ID" value="CAB45800.1"/>
    <property type="status" value="ALT_INIT"/>
    <property type="molecule type" value="Genomic_DNA"/>
</dbReference>
<dbReference type="EMBL" id="AL161511">
    <property type="protein sequence ID" value="CAB77955.1"/>
    <property type="status" value="ALT_INIT"/>
    <property type="molecule type" value="Genomic_DNA"/>
</dbReference>
<dbReference type="EMBL" id="CP002687">
    <property type="protein sequence ID" value="AEE82623.1"/>
    <property type="molecule type" value="Genomic_DNA"/>
</dbReference>
<dbReference type="EMBL" id="BT022009">
    <property type="protein sequence ID" value="AAY25421.1"/>
    <property type="molecule type" value="mRNA"/>
</dbReference>
<dbReference type="EMBL" id="AK229486">
    <property type="protein sequence ID" value="BAF01344.1"/>
    <property type="molecule type" value="mRNA"/>
</dbReference>
<dbReference type="PIR" id="T10557">
    <property type="entry name" value="T10557"/>
</dbReference>
<dbReference type="SMR" id="Q501F8"/>
<dbReference type="BioGRID" id="11684">
    <property type="interactions" value="17"/>
</dbReference>
<dbReference type="FunCoup" id="Q501F8">
    <property type="interactions" value="1"/>
</dbReference>
<dbReference type="IntAct" id="Q501F8">
    <property type="interactions" value="17"/>
</dbReference>
<dbReference type="STRING" id="3702.Q501F8"/>
<dbReference type="GlyGen" id="Q501F8">
    <property type="glycosylation" value="1 site"/>
</dbReference>
<dbReference type="iPTMnet" id="Q501F8"/>
<dbReference type="PaxDb" id="3702-AT4G08300.1"/>
<dbReference type="ProteomicsDB" id="242398"/>
<dbReference type="EnsemblPlants" id="AT4G08300.1">
    <property type="protein sequence ID" value="AT4G08300.1"/>
    <property type="gene ID" value="AT4G08300"/>
</dbReference>
<dbReference type="Gramene" id="AT4G08300.1">
    <property type="protein sequence ID" value="AT4G08300.1"/>
    <property type="gene ID" value="AT4G08300"/>
</dbReference>
<dbReference type="KEGG" id="ath:AT4G08300"/>
<dbReference type="Araport" id="AT4G08300"/>
<dbReference type="TAIR" id="AT4G08300">
    <property type="gene designation" value="UMAMIT17"/>
</dbReference>
<dbReference type="eggNOG" id="ENOG502QQ3S">
    <property type="taxonomic scope" value="Eukaryota"/>
</dbReference>
<dbReference type="HOGENOM" id="CLU_025359_1_1_1"/>
<dbReference type="InParanoid" id="Q501F8"/>
<dbReference type="OMA" id="GMNHWIL"/>
<dbReference type="OrthoDB" id="1728340at2759"/>
<dbReference type="PhylomeDB" id="Q501F8"/>
<dbReference type="PRO" id="PR:Q501F8"/>
<dbReference type="Proteomes" id="UP000006548">
    <property type="component" value="Chromosome 4"/>
</dbReference>
<dbReference type="ExpressionAtlas" id="Q501F8">
    <property type="expression patterns" value="baseline and differential"/>
</dbReference>
<dbReference type="GO" id="GO:0016020">
    <property type="term" value="C:membrane"/>
    <property type="evidence" value="ECO:0007669"/>
    <property type="project" value="UniProtKB-SubCell"/>
</dbReference>
<dbReference type="GO" id="GO:0022857">
    <property type="term" value="F:transmembrane transporter activity"/>
    <property type="evidence" value="ECO:0007669"/>
    <property type="project" value="InterPro"/>
</dbReference>
<dbReference type="InterPro" id="IPR000620">
    <property type="entry name" value="EamA_dom"/>
</dbReference>
<dbReference type="InterPro" id="IPR030184">
    <property type="entry name" value="WAT1-related"/>
</dbReference>
<dbReference type="PANTHER" id="PTHR31218">
    <property type="entry name" value="WAT1-RELATED PROTEIN"/>
    <property type="match status" value="1"/>
</dbReference>
<dbReference type="Pfam" id="PF00892">
    <property type="entry name" value="EamA"/>
    <property type="match status" value="2"/>
</dbReference>
<dbReference type="SUPFAM" id="SSF103481">
    <property type="entry name" value="Multidrug resistance efflux transporter EmrE"/>
    <property type="match status" value="2"/>
</dbReference>
<proteinExistence type="evidence at transcript level"/>
<protein>
    <recommendedName>
        <fullName>WAT1-related protein At4g08300</fullName>
    </recommendedName>
</protein>